<comment type="function">
    <text evidence="3">Dehydrogenase; part of the gene cluster that mediates the biosynthesis of azaphilones, a class of fungal metabolites characterized by a highly oxygenated pyrano-quinone bicyclic core and exhibiting a broad range of bioactivities (PubMed:22921072). In the first step, the non-reducing polyketide synthase azaA forms the hexaketide precursor from successive condensations of five malonyl-CoA units, presumably with a simple acetyl-CoA starter unit (PubMed:22921072). The reactive polyketide chain then undergoes a PT-mediated C2-C7 cyclization to afford the aromatic ring and is eventually released as an aldehyde through the R-domain (PubMed:22921072). The putative ketoreductase azaE is proposed to catalyze the reduction of the terminal ketone resulting in the early culture product FK17-P2a (PubMed:22921072). The monooxygenase azaH was demonstrated to be the only enzyme required to convert FK17-P2a to azanigerone E (PubMed:22921072). AzaH first hydroxylates the benzaldehyde intermediate FK17-P2a at C4, which triggers the formation of the pyran-ring to afford azanigerone E (PubMed:22921072). In parallel, the 2,4-dimethylhexanoyl chain is synthesized by the HR-PKS azaB and is proposed to be transferred to the C4-hydroxyl of azanigerone E by the acyltransferase azaD directly from the ACP domain of azaB (PubMed:22921072). Alternatively, the 2,4-dimethyl-hexanoyl chain may be offloaded from the HR-PKS as a carboxylic acid and converted to an acyl-CoA by azaF (PubMed:22921072). The resulting acyl-CoA molecule could then be taken up as a substrate by AzaD to form azanigerone B (PubMed:22921072). To yield the carboxylic acid substituent in azanigerone A, the hydroxypropyl side chain of azanigerone B would need to undergo a C-C oxidative cleavage catalyzed by cytochrome P450 AzaI (PubMed:22921072). AzaI is proposed to act on a vicinal diol that leads to a C-C bond scission either through an alkoxyradical intermediate or a peroxy complex (PubMed:22921072). In the biosynthesis of azanigerone A, azanigerone B first undergoes hydroxylation at C10, possibly catalyzed by one of the two FAD-dependent monooxygenases encoded in the cluster, azaG or azaL, resulting in the vicinal diol azanigerone C (PubMed:22921072). Oxidative cleavage of azanigerone C by azaI would yield the corresponding aldehyde derivative of azanigerone A (PubMed:22921072). Finally, the dehydrogenase azaJ is proposed to convert the aldehyde functional group into the carboxylic acid, completing the conversion from azanigerone B to azanigerone A (PubMed:22921072). Alternatively, the oxidation of aldehyde to carboxylic acid may be catalyzed by the same P450 enzyme azaI via consecutive oxidation or by endogenous alcohol dehydrogenase (PubMed:22921072).</text>
</comment>
<comment type="pathway">
    <text evidence="3">Secondary metabolite biosynthesis.</text>
</comment>
<comment type="induction">
    <text evidence="3">Expression is under the control of the azaphilone cluster-specific transcription factor azaR (PubMed:22921072).</text>
</comment>
<comment type="similarity">
    <text evidence="5">Belongs to the zinc-containing alcohol dehydrogenase family.</text>
</comment>
<accession>G3XMC6</accession>
<feature type="chain" id="PRO_0000437626" description="Dehydrogenase azaJ">
    <location>
        <begin position="1"/>
        <end position="346"/>
    </location>
</feature>
<feature type="binding site" evidence="1">
    <location>
        <begin position="43"/>
        <end position="48"/>
    </location>
    <ligand>
        <name>NADP(+)</name>
        <dbReference type="ChEBI" id="CHEBI:58349"/>
    </ligand>
</feature>
<feature type="binding site" evidence="2">
    <location>
        <begin position="133"/>
        <end position="140"/>
    </location>
    <ligand>
        <name>substrate</name>
    </ligand>
</feature>
<feature type="binding site" evidence="1">
    <location>
        <begin position="170"/>
        <end position="173"/>
    </location>
    <ligand>
        <name>NADP(+)</name>
        <dbReference type="ChEBI" id="CHEBI:58349"/>
    </ligand>
</feature>
<feature type="binding site" evidence="1">
    <location>
        <begin position="193"/>
        <end position="196"/>
    </location>
    <ligand>
        <name>NADP(+)</name>
        <dbReference type="ChEBI" id="CHEBI:58349"/>
    </ligand>
</feature>
<feature type="binding site" evidence="1">
    <location>
        <position position="211"/>
    </location>
    <ligand>
        <name>NADP(+)</name>
        <dbReference type="ChEBI" id="CHEBI:58349"/>
    </ligand>
</feature>
<feature type="binding site" evidence="1">
    <location>
        <begin position="251"/>
        <end position="252"/>
    </location>
    <ligand>
        <name>NADP(+)</name>
        <dbReference type="ChEBI" id="CHEBI:58349"/>
    </ligand>
</feature>
<feature type="binding site" evidence="2">
    <location>
        <begin position="269"/>
        <end position="273"/>
    </location>
    <ligand>
        <name>substrate</name>
    </ligand>
</feature>
<feature type="binding site" evidence="1">
    <location>
        <begin position="336"/>
        <end position="337"/>
    </location>
    <ligand>
        <name>NADP(+)</name>
        <dbReference type="ChEBI" id="CHEBI:58349"/>
    </ligand>
</feature>
<dbReference type="EC" id="1.-.-.-" evidence="6"/>
<dbReference type="EMBL" id="ACJE01000001">
    <property type="protein sequence ID" value="EHA28239.1"/>
    <property type="molecule type" value="Genomic_DNA"/>
</dbReference>
<dbReference type="SMR" id="G3XMC6"/>
<dbReference type="STRING" id="380704.G3XMC6"/>
<dbReference type="VEuPathDB" id="FungiDB:ASPNIDRAFT2_1114656"/>
<dbReference type="HOGENOM" id="CLU_026673_16_5_1"/>
<dbReference type="OrthoDB" id="16292at5052"/>
<dbReference type="Proteomes" id="UP000009038">
    <property type="component" value="Unassembled WGS sequence"/>
</dbReference>
<dbReference type="GO" id="GO:0000166">
    <property type="term" value="F:nucleotide binding"/>
    <property type="evidence" value="ECO:0007669"/>
    <property type="project" value="UniProtKB-KW"/>
</dbReference>
<dbReference type="GO" id="GO:0016651">
    <property type="term" value="F:oxidoreductase activity, acting on NAD(P)H"/>
    <property type="evidence" value="ECO:0007669"/>
    <property type="project" value="InterPro"/>
</dbReference>
<dbReference type="CDD" id="cd08249">
    <property type="entry name" value="enoyl_reductase_like"/>
    <property type="match status" value="1"/>
</dbReference>
<dbReference type="Gene3D" id="3.90.180.10">
    <property type="entry name" value="Medium-chain alcohol dehydrogenases, catalytic domain"/>
    <property type="match status" value="1"/>
</dbReference>
<dbReference type="Gene3D" id="3.40.50.720">
    <property type="entry name" value="NAD(P)-binding Rossmann-like Domain"/>
    <property type="match status" value="1"/>
</dbReference>
<dbReference type="InterPro" id="IPR013149">
    <property type="entry name" value="ADH-like_C"/>
</dbReference>
<dbReference type="InterPro" id="IPR013154">
    <property type="entry name" value="ADH-like_N"/>
</dbReference>
<dbReference type="InterPro" id="IPR011032">
    <property type="entry name" value="GroES-like_sf"/>
</dbReference>
<dbReference type="InterPro" id="IPR036291">
    <property type="entry name" value="NAD(P)-bd_dom_sf"/>
</dbReference>
<dbReference type="InterPro" id="IPR020843">
    <property type="entry name" value="PKS_ER"/>
</dbReference>
<dbReference type="InterPro" id="IPR047122">
    <property type="entry name" value="Trans-enoyl_RdTase-like"/>
</dbReference>
<dbReference type="PANTHER" id="PTHR45348">
    <property type="entry name" value="HYPOTHETICAL OXIDOREDUCTASE (EUROFUNG)"/>
    <property type="match status" value="1"/>
</dbReference>
<dbReference type="PANTHER" id="PTHR45348:SF2">
    <property type="entry name" value="ZINC-TYPE ALCOHOL DEHYDROGENASE-LIKE PROTEIN C2E1P3.01"/>
    <property type="match status" value="1"/>
</dbReference>
<dbReference type="Pfam" id="PF08240">
    <property type="entry name" value="ADH_N"/>
    <property type="match status" value="1"/>
</dbReference>
<dbReference type="Pfam" id="PF00107">
    <property type="entry name" value="ADH_zinc_N"/>
    <property type="match status" value="1"/>
</dbReference>
<dbReference type="SMART" id="SM00829">
    <property type="entry name" value="PKS_ER"/>
    <property type="match status" value="1"/>
</dbReference>
<dbReference type="SUPFAM" id="SSF50129">
    <property type="entry name" value="GroES-like"/>
    <property type="match status" value="1"/>
</dbReference>
<dbReference type="SUPFAM" id="SSF51735">
    <property type="entry name" value="NAD(P)-binding Rossmann-fold domains"/>
    <property type="match status" value="1"/>
</dbReference>
<gene>
    <name evidence="4" type="primary">azaJ</name>
    <name type="ORF">ASPNIDRAFT_43447</name>
</gene>
<reference key="1">
    <citation type="journal article" date="2011" name="Genome Res.">
        <title>Comparative genomics of citric-acid-producing Aspergillus niger ATCC 1015 versus enzyme-producing CBS 513.88.</title>
        <authorList>
            <person name="Andersen M.R."/>
            <person name="Salazar M.P."/>
            <person name="Schaap P.J."/>
            <person name="van de Vondervoort P.J.I."/>
            <person name="Culley D."/>
            <person name="Thykaer J."/>
            <person name="Frisvad J.C."/>
            <person name="Nielsen K.F."/>
            <person name="Albang R."/>
            <person name="Albermann K."/>
            <person name="Berka R.M."/>
            <person name="Braus G.H."/>
            <person name="Braus-Stromeyer S.A."/>
            <person name="Corrochano L.M."/>
            <person name="Dai Z."/>
            <person name="van Dijck P.W.M."/>
            <person name="Hofmann G."/>
            <person name="Lasure L.L."/>
            <person name="Magnuson J.K."/>
            <person name="Menke H."/>
            <person name="Meijer M."/>
            <person name="Meijer S.L."/>
            <person name="Nielsen J.B."/>
            <person name="Nielsen M.L."/>
            <person name="van Ooyen A.J.J."/>
            <person name="Pel H.J."/>
            <person name="Poulsen L."/>
            <person name="Samson R.A."/>
            <person name="Stam H."/>
            <person name="Tsang A."/>
            <person name="van den Brink J.M."/>
            <person name="Atkins A."/>
            <person name="Aerts A."/>
            <person name="Shapiro H."/>
            <person name="Pangilinan J."/>
            <person name="Salamov A."/>
            <person name="Lou Y."/>
            <person name="Lindquist E."/>
            <person name="Lucas S."/>
            <person name="Grimwood J."/>
            <person name="Grigoriev I.V."/>
            <person name="Kubicek C.P."/>
            <person name="Martinez D."/>
            <person name="van Peij N.N.M.E."/>
            <person name="Roubos J.A."/>
            <person name="Nielsen J."/>
            <person name="Baker S.E."/>
        </authorList>
    </citation>
    <scope>NUCLEOTIDE SEQUENCE [LARGE SCALE GENOMIC DNA]</scope>
    <source>
        <strain>ATCC 1015 / CBS 113.46 / FGSC A1144 / LSHB Ac4 / NCTC 3858a / NRRL 328 / USDA 3528.7</strain>
    </source>
</reference>
<reference key="2">
    <citation type="journal article" date="2012" name="Chem. Biol.">
        <title>Characterization of a silent azaphilone gene cluster from Aspergillus niger ATCC 1015 reveals a hydroxylation-mediated pyran-ring formation.</title>
        <authorList>
            <person name="Zabala A.O."/>
            <person name="Xu W."/>
            <person name="Chooi Y.H."/>
            <person name="Tang Y."/>
        </authorList>
    </citation>
    <scope>FUNCTION</scope>
    <scope>INDUCTION</scope>
</reference>
<proteinExistence type="evidence at transcript level"/>
<protein>
    <recommendedName>
        <fullName evidence="4">Dehydrogenase azaJ</fullName>
        <ecNumber evidence="6">1.-.-.-</ecNumber>
    </recommendedName>
    <alternativeName>
        <fullName evidence="4">Azaphilone biosynthesis cluster protein azaJ</fullName>
    </alternativeName>
</protein>
<keyword id="KW-0521">NADP</keyword>
<keyword id="KW-0547">Nucleotide-binding</keyword>
<keyword id="KW-0560">Oxidoreductase</keyword>
<evidence type="ECO:0000250" key="1">
    <source>
        <dbReference type="UniProtKB" id="Q9Y7D0"/>
    </source>
</evidence>
<evidence type="ECO:0000255" key="2"/>
<evidence type="ECO:0000269" key="3">
    <source>
    </source>
</evidence>
<evidence type="ECO:0000303" key="4">
    <source>
    </source>
</evidence>
<evidence type="ECO:0000305" key="5"/>
<evidence type="ECO:0000305" key="6">
    <source>
    </source>
</evidence>
<name>AZAJ_ASPNA</name>
<sequence length="346" mass="36262">MPTNFAAIVPGKNQSLVVQEAPYPTAGENRIVVRVHALAVNAVDYATQMMGETLFPWVTYPLVLGEDIAGEVVAIGPGVTRFKPGDRVVGHAVGTNSNNSAEGAFQQYVVLLENMASPLPHALEYQQAAVVPLAFSTAIVGLFQKDYLGLQIPSLTPTRTGKTLLIWGGATSVGCNAIQLAVAAGYEVITTCSPHNFDLVKSLGATAVFDYKKPSIRDDLREAFRGKTCAGALAIAGVVPQTRNEAAEACLNLVAESEGDKFVALSMPAPPNVPDGVSCKFIFASTVKDNEVSHQLYGYLGEALAHGSFIAAPEAEVVGTGLEAVQGALNALKQGVSAKKLVVTLP</sequence>
<organism>
    <name type="scientific">Aspergillus niger (strain ATCC 1015 / CBS 113.46 / FGSC A1144 / LSHB Ac4 / NCTC 3858a / NRRL 328 / USDA 3528.7)</name>
    <dbReference type="NCBI Taxonomy" id="380704"/>
    <lineage>
        <taxon>Eukaryota</taxon>
        <taxon>Fungi</taxon>
        <taxon>Dikarya</taxon>
        <taxon>Ascomycota</taxon>
        <taxon>Pezizomycotina</taxon>
        <taxon>Eurotiomycetes</taxon>
        <taxon>Eurotiomycetidae</taxon>
        <taxon>Eurotiales</taxon>
        <taxon>Aspergillaceae</taxon>
        <taxon>Aspergillus</taxon>
        <taxon>Aspergillus subgen. Circumdati</taxon>
    </lineage>
</organism>